<protein>
    <recommendedName>
        <fullName>Uncharacterized protein YcfJ</fullName>
    </recommendedName>
</protein>
<comment type="subcellular location">
    <subcellularLocation>
        <location evidence="2">Membrane</location>
        <topology evidence="2">Single-pass membrane protein</topology>
    </subcellularLocation>
</comment>
<comment type="similarity">
    <text evidence="2">To Rickettsia 17 kDa surface antigen.</text>
</comment>
<accession>P0AB37</accession>
<accession>P37796</accession>
<accession>P75951</accession>
<gene>
    <name type="primary">ycfJ</name>
    <name type="ordered locus">SF1114</name>
    <name type="ordered locus">S1194</name>
</gene>
<sequence length="179" mass="18920">MNKSMLAGIGIGVAAALGVAAVASLNVFERGPQYAQVVSATPIKETVKTPRQECRNVTVTHRRPVQDENRITGSVLGAVAGGVIGHQFGGGRGKDVATVVGALGGGYAGNQIQGSLQESDTYTTTQQRCKTVYDKSEKMLGYDVTYKIGDQQGKIRMDRDPGTQIPLDSNGQLILNNKV</sequence>
<feature type="chain" id="PRO_0000168834" description="Uncharacterized protein YcfJ">
    <location>
        <begin position="1"/>
        <end position="179"/>
    </location>
</feature>
<feature type="transmembrane region" description="Helical" evidence="1">
    <location>
        <begin position="5"/>
        <end position="25"/>
    </location>
</feature>
<name>YCFJ_SHIFL</name>
<reference key="1">
    <citation type="journal article" date="2002" name="Nucleic Acids Res.">
        <title>Genome sequence of Shigella flexneri 2a: insights into pathogenicity through comparison with genomes of Escherichia coli K12 and O157.</title>
        <authorList>
            <person name="Jin Q."/>
            <person name="Yuan Z."/>
            <person name="Xu J."/>
            <person name="Wang Y."/>
            <person name="Shen Y."/>
            <person name="Lu W."/>
            <person name="Wang J."/>
            <person name="Liu H."/>
            <person name="Yang J."/>
            <person name="Yang F."/>
            <person name="Zhang X."/>
            <person name="Zhang J."/>
            <person name="Yang G."/>
            <person name="Wu H."/>
            <person name="Qu D."/>
            <person name="Dong J."/>
            <person name="Sun L."/>
            <person name="Xue Y."/>
            <person name="Zhao A."/>
            <person name="Gao Y."/>
            <person name="Zhu J."/>
            <person name="Kan B."/>
            <person name="Ding K."/>
            <person name="Chen S."/>
            <person name="Cheng H."/>
            <person name="Yao Z."/>
            <person name="He B."/>
            <person name="Chen R."/>
            <person name="Ma D."/>
            <person name="Qiang B."/>
            <person name="Wen Y."/>
            <person name="Hou Y."/>
            <person name="Yu J."/>
        </authorList>
    </citation>
    <scope>NUCLEOTIDE SEQUENCE [LARGE SCALE GENOMIC DNA]</scope>
    <source>
        <strain>301 / Serotype 2a</strain>
    </source>
</reference>
<reference key="2">
    <citation type="journal article" date="2003" name="Infect. Immun.">
        <title>Complete genome sequence and comparative genomics of Shigella flexneri serotype 2a strain 2457T.</title>
        <authorList>
            <person name="Wei J."/>
            <person name="Goldberg M.B."/>
            <person name="Burland V."/>
            <person name="Venkatesan M.M."/>
            <person name="Deng W."/>
            <person name="Fournier G."/>
            <person name="Mayhew G.F."/>
            <person name="Plunkett G. III"/>
            <person name="Rose D.J."/>
            <person name="Darling A."/>
            <person name="Mau B."/>
            <person name="Perna N.T."/>
            <person name="Payne S.M."/>
            <person name="Runyen-Janecky L.J."/>
            <person name="Zhou S."/>
            <person name="Schwartz D.C."/>
            <person name="Blattner F.R."/>
        </authorList>
    </citation>
    <scope>NUCLEOTIDE SEQUENCE [LARGE SCALE GENOMIC DNA]</scope>
    <source>
        <strain>ATCC 700930 / 2457T / Serotype 2a</strain>
    </source>
</reference>
<proteinExistence type="predicted"/>
<evidence type="ECO:0000255" key="1"/>
<evidence type="ECO:0000305" key="2"/>
<keyword id="KW-0472">Membrane</keyword>
<keyword id="KW-1185">Reference proteome</keyword>
<keyword id="KW-0812">Transmembrane</keyword>
<keyword id="KW-1133">Transmembrane helix</keyword>
<organism>
    <name type="scientific">Shigella flexneri</name>
    <dbReference type="NCBI Taxonomy" id="623"/>
    <lineage>
        <taxon>Bacteria</taxon>
        <taxon>Pseudomonadati</taxon>
        <taxon>Pseudomonadota</taxon>
        <taxon>Gammaproteobacteria</taxon>
        <taxon>Enterobacterales</taxon>
        <taxon>Enterobacteriaceae</taxon>
        <taxon>Shigella</taxon>
    </lineage>
</organism>
<dbReference type="EMBL" id="AE005674">
    <property type="protein sequence ID" value="AAN42732.2"/>
    <property type="molecule type" value="Genomic_DNA"/>
</dbReference>
<dbReference type="EMBL" id="AE014073">
    <property type="protein sequence ID" value="AAP16620.1"/>
    <property type="molecule type" value="Genomic_DNA"/>
</dbReference>
<dbReference type="RefSeq" id="NP_707025.2">
    <property type="nucleotide sequence ID" value="NC_004337.2"/>
</dbReference>
<dbReference type="RefSeq" id="WP_001043459.1">
    <property type="nucleotide sequence ID" value="NZ_WPGW01000001.1"/>
</dbReference>
<dbReference type="STRING" id="198214.SF1114"/>
<dbReference type="PaxDb" id="198214-SF1114"/>
<dbReference type="GeneID" id="1024075"/>
<dbReference type="KEGG" id="sfl:SF1114"/>
<dbReference type="KEGG" id="sfx:S1194"/>
<dbReference type="PATRIC" id="fig|198214.7.peg.1304"/>
<dbReference type="HOGENOM" id="CLU_094245_1_0_6"/>
<dbReference type="Proteomes" id="UP000001006">
    <property type="component" value="Chromosome"/>
</dbReference>
<dbReference type="Proteomes" id="UP000002673">
    <property type="component" value="Chromosome"/>
</dbReference>
<dbReference type="GO" id="GO:0019867">
    <property type="term" value="C:outer membrane"/>
    <property type="evidence" value="ECO:0007669"/>
    <property type="project" value="InterPro"/>
</dbReference>
<dbReference type="InterPro" id="IPR051407">
    <property type="entry name" value="Bact_OM_lipoprot/Surf_antigen"/>
</dbReference>
<dbReference type="InterPro" id="IPR008816">
    <property type="entry name" value="Gly_zipper_2TM_dom"/>
</dbReference>
<dbReference type="NCBIfam" id="NF008437">
    <property type="entry name" value="PRK11280.1"/>
    <property type="match status" value="1"/>
</dbReference>
<dbReference type="PANTHER" id="PTHR35603">
    <property type="match status" value="1"/>
</dbReference>
<dbReference type="PANTHER" id="PTHR35603:SF2">
    <property type="entry name" value="OUTER MEMBRANE LIPOPROTEIN"/>
    <property type="match status" value="1"/>
</dbReference>
<dbReference type="Pfam" id="PF05433">
    <property type="entry name" value="Rick_17kDa_Anti"/>
    <property type="match status" value="1"/>
</dbReference>